<keyword id="KW-0963">Cytoplasm</keyword>
<keyword id="KW-0968">Cytoplasmic vesicle</keyword>
<keyword id="KW-0256">Endoplasmic reticulum</keyword>
<keyword id="KW-0931">ER-Golgi transport</keyword>
<keyword id="KW-0333">Golgi apparatus</keyword>
<keyword id="KW-0472">Membrane</keyword>
<keyword id="KW-0479">Metal-binding</keyword>
<keyword id="KW-0653">Protein transport</keyword>
<keyword id="KW-1185">Reference proteome</keyword>
<keyword id="KW-0813">Transport</keyword>
<keyword id="KW-0862">Zinc</keyword>
<reference key="1">
    <citation type="journal article" date="2009" name="Nature">
        <title>Evolution of pathogenicity and sexual reproduction in eight Candida genomes.</title>
        <authorList>
            <person name="Butler G."/>
            <person name="Rasmussen M.D."/>
            <person name="Lin M.F."/>
            <person name="Santos M.A.S."/>
            <person name="Sakthikumar S."/>
            <person name="Munro C.A."/>
            <person name="Rheinbay E."/>
            <person name="Grabherr M."/>
            <person name="Forche A."/>
            <person name="Reedy J.L."/>
            <person name="Agrafioti I."/>
            <person name="Arnaud M.B."/>
            <person name="Bates S."/>
            <person name="Brown A.J.P."/>
            <person name="Brunke S."/>
            <person name="Costanzo M.C."/>
            <person name="Fitzpatrick D.A."/>
            <person name="de Groot P.W.J."/>
            <person name="Harris D."/>
            <person name="Hoyer L.L."/>
            <person name="Hube B."/>
            <person name="Klis F.M."/>
            <person name="Kodira C."/>
            <person name="Lennard N."/>
            <person name="Logue M.E."/>
            <person name="Martin R."/>
            <person name="Neiman A.M."/>
            <person name="Nikolaou E."/>
            <person name="Quail M.A."/>
            <person name="Quinn J."/>
            <person name="Santos M.C."/>
            <person name="Schmitzberger F.F."/>
            <person name="Sherlock G."/>
            <person name="Shah P."/>
            <person name="Silverstein K.A.T."/>
            <person name="Skrzypek M.S."/>
            <person name="Soll D."/>
            <person name="Staggs R."/>
            <person name="Stansfield I."/>
            <person name="Stumpf M.P.H."/>
            <person name="Sudbery P.E."/>
            <person name="Srikantha T."/>
            <person name="Zeng Q."/>
            <person name="Berman J."/>
            <person name="Berriman M."/>
            <person name="Heitman J."/>
            <person name="Gow N.A.R."/>
            <person name="Lorenz M.C."/>
            <person name="Birren B.W."/>
            <person name="Kellis M."/>
            <person name="Cuomo C.A."/>
        </authorList>
    </citation>
    <scope>NUCLEOTIDE SEQUENCE [LARGE SCALE GENOMIC DNA]</scope>
    <source>
        <strain>ATCC 11503 / BCRC 21390 / CBS 2605 / JCM 1781 / NBRC 1676 / NRRL YB-4239</strain>
    </source>
</reference>
<gene>
    <name type="primary">SEC24</name>
    <name type="ORF">LELG_00338</name>
</gene>
<proteinExistence type="inferred from homology"/>
<organism>
    <name type="scientific">Lodderomyces elongisporus (strain ATCC 11503 / CBS 2605 / JCM 1781 / NBRC 1676 / NRRL YB-4239)</name>
    <name type="common">Yeast</name>
    <name type="synonym">Saccharomyces elongisporus</name>
    <dbReference type="NCBI Taxonomy" id="379508"/>
    <lineage>
        <taxon>Eukaryota</taxon>
        <taxon>Fungi</taxon>
        <taxon>Dikarya</taxon>
        <taxon>Ascomycota</taxon>
        <taxon>Saccharomycotina</taxon>
        <taxon>Pichiomycetes</taxon>
        <taxon>Debaryomycetaceae</taxon>
        <taxon>Candida/Lodderomyces clade</taxon>
        <taxon>Lodderomyces</taxon>
    </lineage>
</organism>
<feature type="chain" id="PRO_0000295490" description="Protein transport protein SEC24">
    <location>
        <begin position="1"/>
        <end position="964"/>
    </location>
</feature>
<feature type="region of interest" description="Disordered" evidence="2">
    <location>
        <begin position="1"/>
        <end position="48"/>
    </location>
</feature>
<feature type="region of interest" description="Disordered" evidence="2">
    <location>
        <begin position="80"/>
        <end position="111"/>
    </location>
</feature>
<feature type="region of interest" description="Zinc finger-like">
    <location>
        <begin position="262"/>
        <end position="287"/>
    </location>
</feature>
<feature type="region of interest" description="Disordered" evidence="2">
    <location>
        <begin position="792"/>
        <end position="812"/>
    </location>
</feature>
<feature type="compositionally biased region" description="Low complexity" evidence="2">
    <location>
        <begin position="8"/>
        <end position="48"/>
    </location>
</feature>
<feature type="compositionally biased region" description="Low complexity" evidence="2">
    <location>
        <begin position="81"/>
        <end position="108"/>
    </location>
</feature>
<feature type="compositionally biased region" description="Acidic residues" evidence="2">
    <location>
        <begin position="799"/>
        <end position="812"/>
    </location>
</feature>
<feature type="binding site" evidence="1">
    <location>
        <position position="262"/>
    </location>
    <ligand>
        <name>Zn(2+)</name>
        <dbReference type="ChEBI" id="CHEBI:29105"/>
    </ligand>
</feature>
<feature type="binding site" evidence="1">
    <location>
        <position position="265"/>
    </location>
    <ligand>
        <name>Zn(2+)</name>
        <dbReference type="ChEBI" id="CHEBI:29105"/>
    </ligand>
</feature>
<feature type="binding site" evidence="1">
    <location>
        <position position="284"/>
    </location>
    <ligand>
        <name>Zn(2+)</name>
        <dbReference type="ChEBI" id="CHEBI:29105"/>
    </ligand>
</feature>
<feature type="binding site" evidence="1">
    <location>
        <position position="287"/>
    </location>
    <ligand>
        <name>Zn(2+)</name>
        <dbReference type="ChEBI" id="CHEBI:29105"/>
    </ligand>
</feature>
<accession>A5DSK2</accession>
<name>SEC24_LODEL</name>
<dbReference type="EMBL" id="CH981524">
    <property type="protein sequence ID" value="EDK42160.1"/>
    <property type="molecule type" value="Genomic_DNA"/>
</dbReference>
<dbReference type="RefSeq" id="XP_001527818.1">
    <property type="nucleotide sequence ID" value="XM_001527768.1"/>
</dbReference>
<dbReference type="SMR" id="A5DSK2"/>
<dbReference type="FunCoup" id="A5DSK2">
    <property type="interactions" value="837"/>
</dbReference>
<dbReference type="STRING" id="379508.A5DSK2"/>
<dbReference type="GeneID" id="5235992"/>
<dbReference type="KEGG" id="lel:PVL30_000329"/>
<dbReference type="VEuPathDB" id="FungiDB:LELG_00338"/>
<dbReference type="eggNOG" id="KOG1985">
    <property type="taxonomic scope" value="Eukaryota"/>
</dbReference>
<dbReference type="HOGENOM" id="CLU_004589_2_1_1"/>
<dbReference type="InParanoid" id="A5DSK2"/>
<dbReference type="OMA" id="AVECSKQ"/>
<dbReference type="OrthoDB" id="49016at2759"/>
<dbReference type="Proteomes" id="UP000001996">
    <property type="component" value="Unassembled WGS sequence"/>
</dbReference>
<dbReference type="GO" id="GO:0005801">
    <property type="term" value="C:cis-Golgi network"/>
    <property type="evidence" value="ECO:0007669"/>
    <property type="project" value="EnsemblFungi"/>
</dbReference>
<dbReference type="GO" id="GO:0030127">
    <property type="term" value="C:COPII vesicle coat"/>
    <property type="evidence" value="ECO:0007669"/>
    <property type="project" value="InterPro"/>
</dbReference>
<dbReference type="GO" id="GO:0070971">
    <property type="term" value="C:endoplasmic reticulum exit site"/>
    <property type="evidence" value="ECO:0007669"/>
    <property type="project" value="EnsemblFungi"/>
</dbReference>
<dbReference type="GO" id="GO:0005789">
    <property type="term" value="C:endoplasmic reticulum membrane"/>
    <property type="evidence" value="ECO:0007669"/>
    <property type="project" value="UniProtKB-SubCell"/>
</dbReference>
<dbReference type="GO" id="GO:1990753">
    <property type="term" value="C:equatorial cell cortex"/>
    <property type="evidence" value="ECO:0007669"/>
    <property type="project" value="EnsemblFungi"/>
</dbReference>
<dbReference type="GO" id="GO:0000139">
    <property type="term" value="C:Golgi membrane"/>
    <property type="evidence" value="ECO:0007669"/>
    <property type="project" value="UniProtKB-SubCell"/>
</dbReference>
<dbReference type="GO" id="GO:0000149">
    <property type="term" value="F:SNARE binding"/>
    <property type="evidence" value="ECO:0007669"/>
    <property type="project" value="TreeGrafter"/>
</dbReference>
<dbReference type="GO" id="GO:0008270">
    <property type="term" value="F:zinc ion binding"/>
    <property type="evidence" value="ECO:0007669"/>
    <property type="project" value="InterPro"/>
</dbReference>
<dbReference type="GO" id="GO:0090110">
    <property type="term" value="P:COPII-coated vesicle cargo loading"/>
    <property type="evidence" value="ECO:0007669"/>
    <property type="project" value="TreeGrafter"/>
</dbReference>
<dbReference type="GO" id="GO:0006886">
    <property type="term" value="P:intracellular protein transport"/>
    <property type="evidence" value="ECO:0007669"/>
    <property type="project" value="InterPro"/>
</dbReference>
<dbReference type="Gene3D" id="2.60.40.1670">
    <property type="entry name" value="beta-sandwich domain of Sec23/24"/>
    <property type="match status" value="1"/>
</dbReference>
<dbReference type="Gene3D" id="1.20.120.730">
    <property type="entry name" value="Sec23/Sec24 helical domain"/>
    <property type="match status" value="1"/>
</dbReference>
<dbReference type="Gene3D" id="3.40.20.10">
    <property type="entry name" value="Severin"/>
    <property type="match status" value="1"/>
</dbReference>
<dbReference type="Gene3D" id="3.40.50.410">
    <property type="entry name" value="von Willebrand factor, type A domain"/>
    <property type="match status" value="1"/>
</dbReference>
<dbReference type="Gene3D" id="2.30.30.380">
    <property type="entry name" value="Zn-finger domain of Sec23/24"/>
    <property type="match status" value="1"/>
</dbReference>
<dbReference type="InterPro" id="IPR029006">
    <property type="entry name" value="ADF-H/Gelsolin-like_dom_sf"/>
</dbReference>
<dbReference type="InterPro" id="IPR007123">
    <property type="entry name" value="Gelsolin-like_dom"/>
</dbReference>
<dbReference type="InterPro" id="IPR036180">
    <property type="entry name" value="Gelsolin-like_dom_sf"/>
</dbReference>
<dbReference type="InterPro" id="IPR006900">
    <property type="entry name" value="Sec23/24_helical_dom"/>
</dbReference>
<dbReference type="InterPro" id="IPR036175">
    <property type="entry name" value="Sec23/24_helical_dom_sf"/>
</dbReference>
<dbReference type="InterPro" id="IPR006896">
    <property type="entry name" value="Sec23/24_trunk_dom"/>
</dbReference>
<dbReference type="InterPro" id="IPR012990">
    <property type="entry name" value="Sec23_24_beta_S"/>
</dbReference>
<dbReference type="InterPro" id="IPR050550">
    <property type="entry name" value="SEC23_SEC24_subfamily"/>
</dbReference>
<dbReference type="InterPro" id="IPR036465">
    <property type="entry name" value="vWFA_dom_sf"/>
</dbReference>
<dbReference type="InterPro" id="IPR006895">
    <property type="entry name" value="Znf_Sec23_Sec24"/>
</dbReference>
<dbReference type="InterPro" id="IPR036174">
    <property type="entry name" value="Znf_Sec23_Sec24_sf"/>
</dbReference>
<dbReference type="PANTHER" id="PTHR13803">
    <property type="entry name" value="SEC24-RELATED PROTEIN"/>
    <property type="match status" value="1"/>
</dbReference>
<dbReference type="PANTHER" id="PTHR13803:SF39">
    <property type="entry name" value="SECRETORY 24AB, ISOFORM A"/>
    <property type="match status" value="1"/>
</dbReference>
<dbReference type="Pfam" id="PF00626">
    <property type="entry name" value="Gelsolin"/>
    <property type="match status" value="1"/>
</dbReference>
<dbReference type="Pfam" id="PF08033">
    <property type="entry name" value="Sec23_BS"/>
    <property type="match status" value="1"/>
</dbReference>
<dbReference type="Pfam" id="PF04815">
    <property type="entry name" value="Sec23_helical"/>
    <property type="match status" value="1"/>
</dbReference>
<dbReference type="Pfam" id="PF04811">
    <property type="entry name" value="Sec23_trunk"/>
    <property type="match status" value="1"/>
</dbReference>
<dbReference type="Pfam" id="PF04810">
    <property type="entry name" value="zf-Sec23_Sec24"/>
    <property type="match status" value="1"/>
</dbReference>
<dbReference type="SUPFAM" id="SSF81995">
    <property type="entry name" value="beta-sandwich domain of Sec23/24"/>
    <property type="match status" value="1"/>
</dbReference>
<dbReference type="SUPFAM" id="SSF82754">
    <property type="entry name" value="C-terminal, gelsolin-like domain of Sec23/24"/>
    <property type="match status" value="1"/>
</dbReference>
<dbReference type="SUPFAM" id="SSF81811">
    <property type="entry name" value="Helical domain of Sec23/24"/>
    <property type="match status" value="1"/>
</dbReference>
<dbReference type="SUPFAM" id="SSF53300">
    <property type="entry name" value="vWA-like"/>
    <property type="match status" value="1"/>
</dbReference>
<dbReference type="SUPFAM" id="SSF82919">
    <property type="entry name" value="Zn-finger domain of Sec23/24"/>
    <property type="match status" value="1"/>
</dbReference>
<comment type="function">
    <text evidence="1">Component of the coat protein complex II (COPII) which promotes the formation of transport vesicles from the endoplasmic reticulum (ER). The coat has two main functions, the physical deformation of the endoplasmic reticulum membrane into vesicles and the selection of cargo molecules (By similarity).</text>
</comment>
<comment type="subunit">
    <text evidence="1">The COPII coat is composed of at least 5 proteins: the SEC23/24 complex, the SEC13/31 complex, and the protein SAR1. Golgi apparatus membrane; Peripheral membrane protein; Cytoplasmic side.</text>
</comment>
<comment type="subcellular location">
    <subcellularLocation>
        <location evidence="1">Cytoplasm</location>
    </subcellularLocation>
    <subcellularLocation>
        <location evidence="1">Cytoplasmic vesicle</location>
        <location evidence="1">COPII-coated vesicle membrane</location>
        <topology evidence="1">Peripheral membrane protein</topology>
        <orientation evidence="1">Cytoplasmic side</orientation>
    </subcellularLocation>
    <subcellularLocation>
        <location evidence="1">Endoplasmic reticulum membrane</location>
        <topology evidence="1">Peripheral membrane protein</topology>
        <orientation evidence="1">Cytoplasmic side</orientation>
    </subcellularLocation>
    <subcellularLocation>
        <location evidence="1">Golgi apparatus membrane</location>
        <topology evidence="1">Peripheral membrane protein</topology>
        <orientation evidence="1">Cytoplasmic side</orientation>
    </subcellularLocation>
</comment>
<comment type="similarity">
    <text evidence="3">Belongs to the SEC23/SEC24 family. SEC24 subfamily.</text>
</comment>
<sequence length="964" mass="105640">MSGRRRAYPQPQYSAAAPSGISSPPVSQFQQQQQQPGQPGQPQAGFQGAYGAAAGVPAYGADQLLGQFQQMSVGNGAAVGTPQQQFQQPQYPQAQYQQTQQQQQQAPQVNPQLSYDPYQPQPQAGIYGQGMGGIPPAAGVGAGAQPVASYGAYGQASNLAGGVQLNALYTTDLSRDLPPPIAELSYQPPPITLADTATIIPGSKTANASSDYFRSTLNVVPNNSSLLKKSKLPLALVVKPYNALKIPDENVPVTCDTVISRCRRCRGYINPFITLAENGRRWRCNFCNLLNDIPSAFEYDEISGQVKNKFDRVELNHSVVEFIAPKEYMARAPQPIVYVFIIDVSVHAVSSGLTGTITRTILESLDRIPNENKTARVAFIGVDTNLHYFRFNEGLDGTEIMVVADIDEPFLPSPGGLLVNLDENREAIEKLLYDFPSFFESTANQGFALGPALKAGHKLISNVGGKLVCFAATLPNIGEGKLSVRDEASVAGKPKEAKALLTPADSFYKSFAVNCNSSQVTVDLFLTSAAYQDVATLANLPRFTAGQTHFYPAWTSNKYEDVAKLSKEVSDHLSQDIALEAVLRVRGSTGFRMSSFYGNFFNRSSDLCSFPTFPRDQSYLIEMSIEETINKPVVYFQAAVLHSTSFGERRIRVMNLALPTSSKLVDVYASADQLAITNYFTHKAIEKALSSSLPEAREYLISRVVDILNIYRKELVAGNVSGASPLQISTNLRMLPLLLFCLTKNLAFRSDRVPSDHRAAALNNLGSLPIPQLIKSIYPTVYSLHNMPDSCGLPGVKEESEEDGNDDNDEQGVEVDVVLPEPINDSKSSWENYGLYLIDNGSELFLWVSGNVVPGLIQDVFGTENLYEIPTGKTELPEYSIEESEFNYRVRQIIGKVREQPDSIIWKNLYVVVGASSNEPIEISQQRDLMALRMWASSCLVEDKTGSEPSYRDFLTSLKSKVSQ</sequence>
<evidence type="ECO:0000250" key="1"/>
<evidence type="ECO:0000256" key="2">
    <source>
        <dbReference type="SAM" id="MobiDB-lite"/>
    </source>
</evidence>
<evidence type="ECO:0000305" key="3"/>
<protein>
    <recommendedName>
        <fullName>Protein transport protein SEC24</fullName>
    </recommendedName>
</protein>